<name>AKR1_MYCMD</name>
<sequence length="844" mass="90932">MAAPGTPLSSSATQAISVSTVDAPSDPLLSSQSAQLDGHSSWDTHMGGSNGIGSRAPSRANTPGQDQMPLTIHSAAQRGDLPAIMRLVDSGRATVHDRDDDNITPLHWAAINAQLATCRYLLDHGAQVDALGGDLIASPLQWAARNGHVYVLELLCSRGADPTITDSQGFNALHLTVHSSAVMPLVFMLQQPSLDSPEGLDSTDSQGHTALMWAAYQGDAISVDILLKHGADVHKRDGAGLTAMHWAVVKGNRLCIRLLADAKADLLAKEDSGKTPRDMAIELKSIGAYRKALADIGLEEDGRRKQRTFGASTDRTARLATMVVPFVALGFIFATFAALPWYTAAPFAAAELFGMHHIVTRVILDPHEHDFLQRSNYFLAIVAGSIAWVGWEWVHKLASATPGYASNNLFFALSLIVCSWNLFRAASISPGYAPLVPSALHRREIVTQLAQQGRLNGQTYCVSCMARKPMRSKHCKLCKRCVARHDHHCPWVANCIGVGNHRQFLLFVGALVVGVLQFLYLTVVYYSINAPPYDPLPDSSYETCHLPFAFLCTATTFDAFLLGVALWAALQLTWTVILLVAQAWQITRQMTTLEVSNLGRFGFMGGKGGQSYAGQTNFIAQHSGRGQPSGSLSAATDRLQGIHKQFGENENAEIDVNLGADESADATSTHAHAHGSHSKLNLLRRVFASSSSWLLSIVGLDLYTRGKAGEGLKRASAAANPFDHGLLSNCKDFWSRGEDLNLDYTTLYDLPAEVSPGHCQVVPFLVDTVTAGGRGGAWRNRSPASGYSLLRSGADDDDDDSDNATMPVDAAGRRKWSMWSNLKKSAKPPGSATAILPTSNATHA</sequence>
<gene>
    <name type="primary">AKR1</name>
    <name type="ORF">UMAG_04250</name>
</gene>
<comment type="function">
    <text evidence="1">Palmitoyltransferase specific for casein kinase 1.</text>
</comment>
<comment type="catalytic activity">
    <reaction>
        <text>L-cysteinyl-[protein] + hexadecanoyl-CoA = S-hexadecanoyl-L-cysteinyl-[protein] + CoA</text>
        <dbReference type="Rhea" id="RHEA:36683"/>
        <dbReference type="Rhea" id="RHEA-COMP:10131"/>
        <dbReference type="Rhea" id="RHEA-COMP:11032"/>
        <dbReference type="ChEBI" id="CHEBI:29950"/>
        <dbReference type="ChEBI" id="CHEBI:57287"/>
        <dbReference type="ChEBI" id="CHEBI:57379"/>
        <dbReference type="ChEBI" id="CHEBI:74151"/>
        <dbReference type="EC" id="2.3.1.225"/>
    </reaction>
</comment>
<comment type="subcellular location">
    <subcellularLocation>
        <location>Early endosome membrane</location>
        <topology>Multi-pass membrane protein</topology>
    </subcellularLocation>
    <subcellularLocation>
        <location evidence="1">Golgi apparatus membrane</location>
        <topology evidence="1">Multi-pass membrane protein</topology>
    </subcellularLocation>
</comment>
<comment type="domain">
    <text evidence="1">The DHHC domain is required for palmitoyltransferase activity.</text>
</comment>
<comment type="similarity">
    <text evidence="5">Belongs to the DHHC palmitoyltransferase family. AKR/ZDHHC17 subfamily.</text>
</comment>
<keyword id="KW-0012">Acyltransferase</keyword>
<keyword id="KW-0040">ANK repeat</keyword>
<keyword id="KW-0967">Endosome</keyword>
<keyword id="KW-0333">Golgi apparatus</keyword>
<keyword id="KW-0449">Lipoprotein</keyword>
<keyword id="KW-0472">Membrane</keyword>
<keyword id="KW-0564">Palmitate</keyword>
<keyword id="KW-1185">Reference proteome</keyword>
<keyword id="KW-0677">Repeat</keyword>
<keyword id="KW-0808">Transferase</keyword>
<keyword id="KW-0812">Transmembrane</keyword>
<keyword id="KW-1133">Transmembrane helix</keyword>
<feature type="chain" id="PRO_0000212932" description="Palmitoyltransferase AKR1">
    <location>
        <begin position="1"/>
        <end position="844"/>
    </location>
</feature>
<feature type="topological domain" description="Cytoplasmic" evidence="2">
    <location>
        <begin position="1"/>
        <end position="318"/>
    </location>
</feature>
<feature type="transmembrane region" description="Helical" evidence="2">
    <location>
        <begin position="319"/>
        <end position="339"/>
    </location>
</feature>
<feature type="transmembrane region" description="Helical" evidence="2">
    <location>
        <begin position="340"/>
        <end position="360"/>
    </location>
</feature>
<feature type="topological domain" description="Cytoplasmic" evidence="2">
    <location>
        <begin position="361"/>
        <end position="377"/>
    </location>
</feature>
<feature type="transmembrane region" description="Helical" evidence="2">
    <location>
        <begin position="378"/>
        <end position="398"/>
    </location>
</feature>
<feature type="topological domain" description="Lumenal" evidence="2">
    <location>
        <begin position="399"/>
        <end position="408"/>
    </location>
</feature>
<feature type="transmembrane region" description="Helical" evidence="2">
    <location>
        <begin position="409"/>
        <end position="429"/>
    </location>
</feature>
<feature type="topological domain" description="Cytoplasmic" evidence="2">
    <location>
        <begin position="430"/>
        <end position="503"/>
    </location>
</feature>
<feature type="transmembrane region" description="Helical" evidence="2">
    <location>
        <begin position="504"/>
        <end position="524"/>
    </location>
</feature>
<feature type="topological domain" description="Lumenal" evidence="2">
    <location>
        <begin position="525"/>
        <end position="559"/>
    </location>
</feature>
<feature type="transmembrane region" description="Helical" evidence="2">
    <location>
        <begin position="560"/>
        <end position="580"/>
    </location>
</feature>
<feature type="topological domain" description="Cytoplasmic" evidence="2">
    <location>
        <begin position="581"/>
        <end position="844"/>
    </location>
</feature>
<feature type="repeat" description="ANK 1">
    <location>
        <begin position="65"/>
        <end position="96"/>
    </location>
</feature>
<feature type="repeat" description="ANK 2">
    <location>
        <begin position="101"/>
        <end position="130"/>
    </location>
</feature>
<feature type="repeat" description="ANK 3">
    <location>
        <begin position="135"/>
        <end position="164"/>
    </location>
</feature>
<feature type="repeat" description="ANK 4">
    <location>
        <begin position="168"/>
        <end position="198"/>
    </location>
</feature>
<feature type="repeat" description="ANK 5">
    <location>
        <begin position="206"/>
        <end position="235"/>
    </location>
</feature>
<feature type="repeat" description="ANK 6">
    <location>
        <begin position="239"/>
        <end position="268"/>
    </location>
</feature>
<feature type="domain" description="DHHC" evidence="3">
    <location>
        <begin position="459"/>
        <end position="509"/>
    </location>
</feature>
<feature type="region of interest" description="Disordered" evidence="4">
    <location>
        <begin position="18"/>
        <end position="67"/>
    </location>
</feature>
<feature type="region of interest" description="Disordered" evidence="4">
    <location>
        <begin position="789"/>
        <end position="810"/>
    </location>
</feature>
<feature type="region of interest" description="Disordered" evidence="4">
    <location>
        <begin position="822"/>
        <end position="844"/>
    </location>
</feature>
<feature type="compositionally biased region" description="Polar residues" evidence="4">
    <location>
        <begin position="18"/>
        <end position="35"/>
    </location>
</feature>
<feature type="active site" description="S-palmitoyl cysteine intermediate" evidence="1">
    <location>
        <position position="489"/>
    </location>
</feature>
<organism>
    <name type="scientific">Mycosarcoma maydis</name>
    <name type="common">Corn smut fungus</name>
    <name type="synonym">Ustilago maydis</name>
    <dbReference type="NCBI Taxonomy" id="5270"/>
    <lineage>
        <taxon>Eukaryota</taxon>
        <taxon>Fungi</taxon>
        <taxon>Dikarya</taxon>
        <taxon>Basidiomycota</taxon>
        <taxon>Ustilaginomycotina</taxon>
        <taxon>Ustilaginomycetes</taxon>
        <taxon>Ustilaginales</taxon>
        <taxon>Ustilaginaceae</taxon>
        <taxon>Mycosarcoma</taxon>
    </lineage>
</organism>
<accession>Q4P6L3</accession>
<accession>A0A0D1C1N5</accession>
<dbReference type="EC" id="2.3.1.225"/>
<dbReference type="EMBL" id="CM003151">
    <property type="protein sequence ID" value="KIS67752.1"/>
    <property type="molecule type" value="Genomic_DNA"/>
</dbReference>
<dbReference type="RefSeq" id="XP_011390722.1">
    <property type="nucleotide sequence ID" value="XM_011392420.1"/>
</dbReference>
<dbReference type="SMR" id="Q4P6L3"/>
<dbReference type="FunCoup" id="Q4P6L3">
    <property type="interactions" value="228"/>
</dbReference>
<dbReference type="STRING" id="237631.Q4P6L3"/>
<dbReference type="EnsemblFungi" id="KIS67752">
    <property type="protein sequence ID" value="KIS67752"/>
    <property type="gene ID" value="UMAG_04250"/>
</dbReference>
<dbReference type="GeneID" id="23564493"/>
<dbReference type="KEGG" id="uma:UMAG_04250"/>
<dbReference type="VEuPathDB" id="FungiDB:UMAG_04250"/>
<dbReference type="eggNOG" id="KOG0509">
    <property type="taxonomic scope" value="Eukaryota"/>
</dbReference>
<dbReference type="HOGENOM" id="CLU_012510_0_0_1"/>
<dbReference type="InParanoid" id="Q4P6L3"/>
<dbReference type="OMA" id="RECQSHS"/>
<dbReference type="OrthoDB" id="6781668at2759"/>
<dbReference type="Proteomes" id="UP000000561">
    <property type="component" value="Chromosome 12"/>
</dbReference>
<dbReference type="GO" id="GO:0031901">
    <property type="term" value="C:early endosome membrane"/>
    <property type="evidence" value="ECO:0007669"/>
    <property type="project" value="UniProtKB-SubCell"/>
</dbReference>
<dbReference type="GO" id="GO:0000139">
    <property type="term" value="C:Golgi membrane"/>
    <property type="evidence" value="ECO:0007669"/>
    <property type="project" value="UniProtKB-SubCell"/>
</dbReference>
<dbReference type="GO" id="GO:0019706">
    <property type="term" value="F:protein-cysteine S-palmitoyltransferase activity"/>
    <property type="evidence" value="ECO:0007669"/>
    <property type="project" value="UniProtKB-EC"/>
</dbReference>
<dbReference type="Gene3D" id="1.25.40.20">
    <property type="entry name" value="Ankyrin repeat-containing domain"/>
    <property type="match status" value="2"/>
</dbReference>
<dbReference type="InterPro" id="IPR002110">
    <property type="entry name" value="Ankyrin_rpt"/>
</dbReference>
<dbReference type="InterPro" id="IPR036770">
    <property type="entry name" value="Ankyrin_rpt-contain_sf"/>
</dbReference>
<dbReference type="InterPro" id="IPR001594">
    <property type="entry name" value="Palmitoyltrfase_DHHC"/>
</dbReference>
<dbReference type="PANTHER" id="PTHR24161">
    <property type="entry name" value="ANK_REP_REGION DOMAIN-CONTAINING PROTEIN-RELATED"/>
    <property type="match status" value="1"/>
</dbReference>
<dbReference type="PANTHER" id="PTHR24161:SF85">
    <property type="entry name" value="PALMITOYLTRANSFERASE HIP14"/>
    <property type="match status" value="1"/>
</dbReference>
<dbReference type="Pfam" id="PF12796">
    <property type="entry name" value="Ank_2"/>
    <property type="match status" value="2"/>
</dbReference>
<dbReference type="Pfam" id="PF01529">
    <property type="entry name" value="DHHC"/>
    <property type="match status" value="1"/>
</dbReference>
<dbReference type="SMART" id="SM00248">
    <property type="entry name" value="ANK"/>
    <property type="match status" value="5"/>
</dbReference>
<dbReference type="SUPFAM" id="SSF48403">
    <property type="entry name" value="Ankyrin repeat"/>
    <property type="match status" value="1"/>
</dbReference>
<dbReference type="PROSITE" id="PS50297">
    <property type="entry name" value="ANK_REP_REGION"/>
    <property type="match status" value="1"/>
</dbReference>
<dbReference type="PROSITE" id="PS50088">
    <property type="entry name" value="ANK_REPEAT"/>
    <property type="match status" value="4"/>
</dbReference>
<dbReference type="PROSITE" id="PS50216">
    <property type="entry name" value="DHHC"/>
    <property type="match status" value="1"/>
</dbReference>
<protein>
    <recommendedName>
        <fullName>Palmitoyltransferase AKR1</fullName>
        <ecNumber>2.3.1.225</ecNumber>
    </recommendedName>
    <alternativeName>
        <fullName>Ankyrin repeat-containing protein AKR1</fullName>
    </alternativeName>
</protein>
<reference key="1">
    <citation type="journal article" date="2006" name="Nature">
        <title>Insights from the genome of the biotrophic fungal plant pathogen Ustilago maydis.</title>
        <authorList>
            <person name="Kaemper J."/>
            <person name="Kahmann R."/>
            <person name="Boelker M."/>
            <person name="Ma L.-J."/>
            <person name="Brefort T."/>
            <person name="Saville B.J."/>
            <person name="Banuett F."/>
            <person name="Kronstad J.W."/>
            <person name="Gold S.E."/>
            <person name="Mueller O."/>
            <person name="Perlin M.H."/>
            <person name="Woesten H.A.B."/>
            <person name="de Vries R."/>
            <person name="Ruiz-Herrera J."/>
            <person name="Reynaga-Pena C.G."/>
            <person name="Snetselaar K."/>
            <person name="McCann M."/>
            <person name="Perez-Martin J."/>
            <person name="Feldbruegge M."/>
            <person name="Basse C.W."/>
            <person name="Steinberg G."/>
            <person name="Ibeas J.I."/>
            <person name="Holloman W."/>
            <person name="Guzman P."/>
            <person name="Farman M.L."/>
            <person name="Stajich J.E."/>
            <person name="Sentandreu R."/>
            <person name="Gonzalez-Prieto J.M."/>
            <person name="Kennell J.C."/>
            <person name="Molina L."/>
            <person name="Schirawski J."/>
            <person name="Mendoza-Mendoza A."/>
            <person name="Greilinger D."/>
            <person name="Muench K."/>
            <person name="Roessel N."/>
            <person name="Scherer M."/>
            <person name="Vranes M."/>
            <person name="Ladendorf O."/>
            <person name="Vincon V."/>
            <person name="Fuchs U."/>
            <person name="Sandrock B."/>
            <person name="Meng S."/>
            <person name="Ho E.C.H."/>
            <person name="Cahill M.J."/>
            <person name="Boyce K.J."/>
            <person name="Klose J."/>
            <person name="Klosterman S.J."/>
            <person name="Deelstra H.J."/>
            <person name="Ortiz-Castellanos L."/>
            <person name="Li W."/>
            <person name="Sanchez-Alonso P."/>
            <person name="Schreier P.H."/>
            <person name="Haeuser-Hahn I."/>
            <person name="Vaupel M."/>
            <person name="Koopmann E."/>
            <person name="Friedrich G."/>
            <person name="Voss H."/>
            <person name="Schlueter T."/>
            <person name="Margolis J."/>
            <person name="Platt D."/>
            <person name="Swimmer C."/>
            <person name="Gnirke A."/>
            <person name="Chen F."/>
            <person name="Vysotskaia V."/>
            <person name="Mannhaupt G."/>
            <person name="Gueldener U."/>
            <person name="Muensterkoetter M."/>
            <person name="Haase D."/>
            <person name="Oesterheld M."/>
            <person name="Mewes H.-W."/>
            <person name="Mauceli E.W."/>
            <person name="DeCaprio D."/>
            <person name="Wade C.M."/>
            <person name="Butler J."/>
            <person name="Young S.K."/>
            <person name="Jaffe D.B."/>
            <person name="Calvo S.E."/>
            <person name="Nusbaum C."/>
            <person name="Galagan J.E."/>
            <person name="Birren B.W."/>
        </authorList>
    </citation>
    <scope>NUCLEOTIDE SEQUENCE [LARGE SCALE GENOMIC DNA]</scope>
    <source>
        <strain>DSM 14603 / FGSC 9021 / UM521</strain>
    </source>
</reference>
<reference key="2">
    <citation type="submission" date="2014-09" db="EMBL/GenBank/DDBJ databases">
        <authorList>
            <person name="Gueldener U."/>
            <person name="Muensterkoetter M."/>
            <person name="Walter M.C."/>
            <person name="Mannhaupt G."/>
            <person name="Kahmann R."/>
        </authorList>
    </citation>
    <scope>GENOME REANNOTATION</scope>
    <source>
        <strain>DSM 14603 / FGSC 9021 / UM521</strain>
    </source>
</reference>
<proteinExistence type="inferred from homology"/>
<evidence type="ECO:0000250" key="1"/>
<evidence type="ECO:0000255" key="2"/>
<evidence type="ECO:0000255" key="3">
    <source>
        <dbReference type="PROSITE-ProRule" id="PRU00067"/>
    </source>
</evidence>
<evidence type="ECO:0000256" key="4">
    <source>
        <dbReference type="SAM" id="MobiDB-lite"/>
    </source>
</evidence>
<evidence type="ECO:0000305" key="5"/>